<reference key="1">
    <citation type="journal article" date="2001" name="Science">
        <title>Complete genome sequence of a virulent isolate of Streptococcus pneumoniae.</title>
        <authorList>
            <person name="Tettelin H."/>
            <person name="Nelson K.E."/>
            <person name="Paulsen I.T."/>
            <person name="Eisen J.A."/>
            <person name="Read T.D."/>
            <person name="Peterson S.N."/>
            <person name="Heidelberg J.F."/>
            <person name="DeBoy R.T."/>
            <person name="Haft D.H."/>
            <person name="Dodson R.J."/>
            <person name="Durkin A.S."/>
            <person name="Gwinn M.L."/>
            <person name="Kolonay J.F."/>
            <person name="Nelson W.C."/>
            <person name="Peterson J.D."/>
            <person name="Umayam L.A."/>
            <person name="White O."/>
            <person name="Salzberg S.L."/>
            <person name="Lewis M.R."/>
            <person name="Radune D."/>
            <person name="Holtzapple E.K."/>
            <person name="Khouri H.M."/>
            <person name="Wolf A.M."/>
            <person name="Utterback T.R."/>
            <person name="Hansen C.L."/>
            <person name="McDonald L.A."/>
            <person name="Feldblyum T.V."/>
            <person name="Angiuoli S.V."/>
            <person name="Dickinson T."/>
            <person name="Hickey E.K."/>
            <person name="Holt I.E."/>
            <person name="Loftus B.J."/>
            <person name="Yang F."/>
            <person name="Smith H.O."/>
            <person name="Venter J.C."/>
            <person name="Dougherty B.A."/>
            <person name="Morrison D.A."/>
            <person name="Hollingshead S.K."/>
            <person name="Fraser C.M."/>
        </authorList>
    </citation>
    <scope>NUCLEOTIDE SEQUENCE [LARGE SCALE GENOMIC DNA]</scope>
    <source>
        <strain>ATCC BAA-334 / TIGR4</strain>
    </source>
</reference>
<proteinExistence type="inferred from homology"/>
<dbReference type="EMBL" id="AE005672">
    <property type="protein sequence ID" value="AAK75413.1"/>
    <property type="molecule type" value="Genomic_DNA"/>
</dbReference>
<dbReference type="PIR" id="D95152">
    <property type="entry name" value="D95152"/>
</dbReference>
<dbReference type="RefSeq" id="WP_000251935.1">
    <property type="nucleotide sequence ID" value="NZ_CP155539.1"/>
</dbReference>
<dbReference type="SMR" id="Q97QB0"/>
<dbReference type="PaxDb" id="170187-SP_1315"/>
<dbReference type="DNASU" id="931830"/>
<dbReference type="EnsemblBacteria" id="AAK75413">
    <property type="protein sequence ID" value="AAK75413"/>
    <property type="gene ID" value="SP_1315"/>
</dbReference>
<dbReference type="KEGG" id="spn:SP_1315"/>
<dbReference type="eggNOG" id="COG1394">
    <property type="taxonomic scope" value="Bacteria"/>
</dbReference>
<dbReference type="PhylomeDB" id="Q97QB0"/>
<dbReference type="BioCyc" id="SPNE170187:G1FZB-1327-MONOMER"/>
<dbReference type="Proteomes" id="UP000000585">
    <property type="component" value="Chromosome"/>
</dbReference>
<dbReference type="GO" id="GO:0005524">
    <property type="term" value="F:ATP binding"/>
    <property type="evidence" value="ECO:0007669"/>
    <property type="project" value="UniProtKB-UniRule"/>
</dbReference>
<dbReference type="GO" id="GO:0046933">
    <property type="term" value="F:proton-transporting ATP synthase activity, rotational mechanism"/>
    <property type="evidence" value="ECO:0007669"/>
    <property type="project" value="UniProtKB-UniRule"/>
</dbReference>
<dbReference type="GO" id="GO:0046961">
    <property type="term" value="F:proton-transporting ATPase activity, rotational mechanism"/>
    <property type="evidence" value="ECO:0007669"/>
    <property type="project" value="InterPro"/>
</dbReference>
<dbReference type="GO" id="GO:0042777">
    <property type="term" value="P:proton motive force-driven plasma membrane ATP synthesis"/>
    <property type="evidence" value="ECO:0007669"/>
    <property type="project" value="UniProtKB-UniRule"/>
</dbReference>
<dbReference type="Gene3D" id="1.10.287.3240">
    <property type="match status" value="1"/>
</dbReference>
<dbReference type="HAMAP" id="MF_00271">
    <property type="entry name" value="ATP_synth_D_arch"/>
    <property type="match status" value="1"/>
</dbReference>
<dbReference type="InterPro" id="IPR002699">
    <property type="entry name" value="V_ATPase_D"/>
</dbReference>
<dbReference type="NCBIfam" id="NF001546">
    <property type="entry name" value="PRK00373.1-5"/>
    <property type="match status" value="1"/>
</dbReference>
<dbReference type="NCBIfam" id="TIGR00309">
    <property type="entry name" value="V_ATPase_subD"/>
    <property type="match status" value="1"/>
</dbReference>
<dbReference type="PANTHER" id="PTHR11671">
    <property type="entry name" value="V-TYPE ATP SYNTHASE SUBUNIT D"/>
    <property type="match status" value="1"/>
</dbReference>
<dbReference type="Pfam" id="PF01813">
    <property type="entry name" value="ATP-synt_D"/>
    <property type="match status" value="1"/>
</dbReference>
<gene>
    <name evidence="1" type="primary">atpD</name>
    <name type="ordered locus">SP_1315</name>
</gene>
<organism>
    <name type="scientific">Streptococcus pneumoniae serotype 4 (strain ATCC BAA-334 / TIGR4)</name>
    <dbReference type="NCBI Taxonomy" id="170187"/>
    <lineage>
        <taxon>Bacteria</taxon>
        <taxon>Bacillati</taxon>
        <taxon>Bacillota</taxon>
        <taxon>Bacilli</taxon>
        <taxon>Lactobacillales</taxon>
        <taxon>Streptococcaceae</taxon>
        <taxon>Streptococcus</taxon>
    </lineage>
</organism>
<feature type="chain" id="PRO_1000059172" description="V-type ATP synthase subunit D">
    <location>
        <begin position="1"/>
        <end position="203"/>
    </location>
</feature>
<protein>
    <recommendedName>
        <fullName evidence="1">V-type ATP synthase subunit D</fullName>
    </recommendedName>
    <alternativeName>
        <fullName evidence="1">V-ATPase subunit D</fullName>
    </alternativeName>
</protein>
<sequence>MVRLNVKPTRMELNNLKERLTTAERGHKLLKDKRDELMRRFISLIRENNQLRKEVESYLIDNLKSFAVAKSLKNSQMVEELFSIPSKEIELFVEKENIMSVTVPRMHMNITSQNENSEYSYLSSNSEMDDVFATMNSLIYKLLRLAEVEKTCQLMADEIEKTRRRVNGLEYSIIPNLSETIHYIELKLEEAERANLVRIMKVK</sequence>
<accession>Q97QB0</accession>
<comment type="function">
    <text evidence="1">Produces ATP from ADP in the presence of a proton gradient across the membrane.</text>
</comment>
<comment type="similarity">
    <text evidence="1">Belongs to the V-ATPase D subunit family.</text>
</comment>
<evidence type="ECO:0000255" key="1">
    <source>
        <dbReference type="HAMAP-Rule" id="MF_00271"/>
    </source>
</evidence>
<name>VATD_STRPN</name>
<keyword id="KW-0066">ATP synthesis</keyword>
<keyword id="KW-0375">Hydrogen ion transport</keyword>
<keyword id="KW-0406">Ion transport</keyword>
<keyword id="KW-1185">Reference proteome</keyword>
<keyword id="KW-0813">Transport</keyword>